<reference key="1">
    <citation type="journal article" date="1999" name="J. Bacteriol.">
        <title>Pseudomonas aeruginosa fur overlaps with a gene encoding a novel outer membrane lipoprotein, OmlA.</title>
        <authorList>
            <person name="Ochsner U.A."/>
            <person name="Vasil A.I."/>
            <person name="Johnson Z."/>
            <person name="Vasil M.L."/>
        </authorList>
    </citation>
    <scope>NUCLEOTIDE SEQUENCE [GENOMIC DNA]</scope>
    <source>
        <strain>ATCC 15692 / DSM 22644 / CIP 104116 / JCM 14847 / LMG 12228 / 1C / PRS 101 / PAO1</strain>
    </source>
</reference>
<reference key="2">
    <citation type="journal article" date="2000" name="Nature">
        <title>Complete genome sequence of Pseudomonas aeruginosa PAO1, an opportunistic pathogen.</title>
        <authorList>
            <person name="Stover C.K."/>
            <person name="Pham X.-Q.T."/>
            <person name="Erwin A.L."/>
            <person name="Mizoguchi S.D."/>
            <person name="Warrener P."/>
            <person name="Hickey M.J."/>
            <person name="Brinkman F.S.L."/>
            <person name="Hufnagle W.O."/>
            <person name="Kowalik D.J."/>
            <person name="Lagrou M."/>
            <person name="Garber R.L."/>
            <person name="Goltry L."/>
            <person name="Tolentino E."/>
            <person name="Westbrock-Wadman S."/>
            <person name="Yuan Y."/>
            <person name="Brody L.L."/>
            <person name="Coulter S.N."/>
            <person name="Folger K.R."/>
            <person name="Kas A."/>
            <person name="Larbig K."/>
            <person name="Lim R.M."/>
            <person name="Smith K.A."/>
            <person name="Spencer D.H."/>
            <person name="Wong G.K.-S."/>
            <person name="Wu Z."/>
            <person name="Paulsen I.T."/>
            <person name="Reizer J."/>
            <person name="Saier M.H. Jr."/>
            <person name="Hancock R.E.W."/>
            <person name="Lory S."/>
            <person name="Olson M.V."/>
        </authorList>
    </citation>
    <scope>NUCLEOTIDE SEQUENCE [LARGE SCALE GENOMIC DNA]</scope>
    <source>
        <strain>ATCC 15692 / DSM 22644 / CIP 104116 / JCM 14847 / LMG 12228 / 1C / PRS 101 / PAO1</strain>
    </source>
</reference>
<organism>
    <name type="scientific">Pseudomonas aeruginosa (strain ATCC 15692 / DSM 22644 / CIP 104116 / JCM 14847 / LMG 12228 / 1C / PRS 101 / PAO1)</name>
    <dbReference type="NCBI Taxonomy" id="208964"/>
    <lineage>
        <taxon>Bacteria</taxon>
        <taxon>Pseudomonadati</taxon>
        <taxon>Pseudomonadota</taxon>
        <taxon>Gammaproteobacteria</taxon>
        <taxon>Pseudomonadales</taxon>
        <taxon>Pseudomonadaceae</taxon>
        <taxon>Pseudomonas</taxon>
    </lineage>
</organism>
<evidence type="ECO:0000305" key="1"/>
<dbReference type="EMBL" id="AF050676">
    <property type="protein sequence ID" value="AAC05677.1"/>
    <property type="molecule type" value="Genomic_DNA"/>
</dbReference>
<dbReference type="EMBL" id="AE004091">
    <property type="protein sequence ID" value="AAG08152.1"/>
    <property type="molecule type" value="Genomic_DNA"/>
</dbReference>
<dbReference type="PIR" id="B83050">
    <property type="entry name" value="B83050"/>
</dbReference>
<dbReference type="RefSeq" id="NP_253454.1">
    <property type="nucleotide sequence ID" value="NC_002516.2"/>
</dbReference>
<dbReference type="RefSeq" id="WP_003095218.1">
    <property type="nucleotide sequence ID" value="NZ_QZGE01000018.1"/>
</dbReference>
<dbReference type="SMR" id="O68561"/>
<dbReference type="FunCoup" id="O68561">
    <property type="interactions" value="104"/>
</dbReference>
<dbReference type="STRING" id="208964.PA4766"/>
<dbReference type="PaxDb" id="208964-PA4766"/>
<dbReference type="DNASU" id="881790"/>
<dbReference type="GeneID" id="881790"/>
<dbReference type="KEGG" id="pae:PA4766"/>
<dbReference type="PATRIC" id="fig|208964.12.peg.4993"/>
<dbReference type="PseudoCAP" id="PA4766"/>
<dbReference type="HOGENOM" id="CLU_150721_1_0_6"/>
<dbReference type="InParanoid" id="O68561"/>
<dbReference type="OrthoDB" id="9796575at2"/>
<dbReference type="PhylomeDB" id="O68561"/>
<dbReference type="BioCyc" id="PAER208964:G1FZ6-4879-MONOMER"/>
<dbReference type="Proteomes" id="UP000002438">
    <property type="component" value="Chromosome"/>
</dbReference>
<dbReference type="Gene3D" id="3.10.20.280">
    <property type="entry name" value="RnfH-like"/>
    <property type="match status" value="1"/>
</dbReference>
<dbReference type="HAMAP" id="MF_00460">
    <property type="entry name" value="UPF0125_RnfH"/>
    <property type="match status" value="1"/>
</dbReference>
<dbReference type="InterPro" id="IPR016155">
    <property type="entry name" value="Mopterin_synth/thiamin_S_b"/>
</dbReference>
<dbReference type="InterPro" id="IPR005346">
    <property type="entry name" value="RnfH"/>
</dbReference>
<dbReference type="InterPro" id="IPR037021">
    <property type="entry name" value="RnfH_sf"/>
</dbReference>
<dbReference type="NCBIfam" id="NF002490">
    <property type="entry name" value="PRK01777.1"/>
    <property type="match status" value="1"/>
</dbReference>
<dbReference type="PANTHER" id="PTHR37483">
    <property type="entry name" value="UPF0125 PROTEIN RATB"/>
    <property type="match status" value="1"/>
</dbReference>
<dbReference type="PANTHER" id="PTHR37483:SF1">
    <property type="entry name" value="UPF0125 PROTEIN RATB"/>
    <property type="match status" value="1"/>
</dbReference>
<dbReference type="Pfam" id="PF03658">
    <property type="entry name" value="Ub-RnfH"/>
    <property type="match status" value="1"/>
</dbReference>
<dbReference type="SUPFAM" id="SSF54285">
    <property type="entry name" value="MoaD/ThiS"/>
    <property type="match status" value="1"/>
</dbReference>
<gene>
    <name type="ordered locus">PA4766</name>
</gene>
<accession>O68561</accession>
<sequence length="101" mass="10950">MAEIAVEVVYALPERQALLRLSVPAGTSAREAVLLSGIAEAFPGLDVQGCPLGIFGKLLARPEERVLEAGERVEIYRPLIADPKEVRKQRAARARSEREGG</sequence>
<name>YOM2_PSEAE</name>
<proteinExistence type="inferred from homology"/>
<protein>
    <recommendedName>
        <fullName>UPF0125 protein PA4766</fullName>
    </recommendedName>
</protein>
<feature type="chain" id="PRO_0000192496" description="UPF0125 protein PA4766">
    <location>
        <begin position="1"/>
        <end position="101"/>
    </location>
</feature>
<comment type="similarity">
    <text evidence="1">Belongs to the UPF0125 (RnfH) family.</text>
</comment>
<keyword id="KW-1185">Reference proteome</keyword>